<feature type="initiator methionine" description="Removed" evidence="1">
    <location>
        <position position="1"/>
    </location>
</feature>
<feature type="chain" id="PRO_0000189001" description="Actin nucleation-promoting factor WASL">
    <location>
        <begin position="2"/>
        <end position="501"/>
    </location>
</feature>
<feature type="domain" description="WH1" evidence="6">
    <location>
        <begin position="31"/>
        <end position="138"/>
    </location>
</feature>
<feature type="domain" description="CRIB" evidence="4">
    <location>
        <begin position="200"/>
        <end position="213"/>
    </location>
</feature>
<feature type="domain" description="WH2 1" evidence="5">
    <location>
        <begin position="401"/>
        <end position="418"/>
    </location>
</feature>
<feature type="domain" description="WH2 2" evidence="5">
    <location>
        <begin position="429"/>
        <end position="446"/>
    </location>
</feature>
<feature type="region of interest" description="Disordered" evidence="7">
    <location>
        <begin position="135"/>
        <end position="158"/>
    </location>
</feature>
<feature type="region of interest" description="Disordered" evidence="7">
    <location>
        <begin position="263"/>
        <end position="403"/>
    </location>
</feature>
<feature type="region of interest" description="Disordered" evidence="7">
    <location>
        <begin position="442"/>
        <end position="501"/>
    </location>
</feature>
<feature type="compositionally biased region" description="Pro residues" evidence="7">
    <location>
        <begin position="273"/>
        <end position="387"/>
    </location>
</feature>
<feature type="compositionally biased region" description="Polar residues" evidence="7">
    <location>
        <begin position="442"/>
        <end position="453"/>
    </location>
</feature>
<feature type="compositionally biased region" description="Acidic residues" evidence="7">
    <location>
        <begin position="482"/>
        <end position="501"/>
    </location>
</feature>
<feature type="modified residue" description="N-acetylserine" evidence="1">
    <location>
        <position position="2"/>
    </location>
</feature>
<feature type="modified residue" description="Phosphoserine; by TNK2" evidence="1">
    <location>
        <position position="239"/>
    </location>
</feature>
<feature type="modified residue" description="Phosphotyrosine; by FAK1 and TNK2" evidence="11 17 18 19 20">
    <location>
        <position position="253"/>
    </location>
</feature>
<feature type="modified residue" description="Omega-N-methylarginine" evidence="1">
    <location>
        <position position="304"/>
    </location>
</feature>
<feature type="modified residue" description="Phosphoserine" evidence="20">
    <location>
        <position position="480"/>
    </location>
</feature>
<feature type="modified residue" description="Phosphoserine" evidence="1">
    <location>
        <position position="481"/>
    </location>
</feature>
<feature type="mutagenesis site" description="No effect on phosphorylation. Protein preferentially localized in cytoplasm." evidence="9">
    <original>Y</original>
    <variation>E</variation>
    <location>
        <position position="253"/>
    </location>
</feature>
<feature type="mutagenesis site" description="Abolishes phosphorylation. Protein preferentially localized in nucleus." evidence="9">
    <original>Y</original>
    <variation>F</variation>
    <location>
        <position position="253"/>
    </location>
</feature>
<organism>
    <name type="scientific">Mus musculus</name>
    <name type="common">Mouse</name>
    <dbReference type="NCBI Taxonomy" id="10090"/>
    <lineage>
        <taxon>Eukaryota</taxon>
        <taxon>Metazoa</taxon>
        <taxon>Chordata</taxon>
        <taxon>Craniata</taxon>
        <taxon>Vertebrata</taxon>
        <taxon>Euteleostomi</taxon>
        <taxon>Mammalia</taxon>
        <taxon>Eutheria</taxon>
        <taxon>Euarchontoglires</taxon>
        <taxon>Glires</taxon>
        <taxon>Rodentia</taxon>
        <taxon>Myomorpha</taxon>
        <taxon>Muroidea</taxon>
        <taxon>Muridae</taxon>
        <taxon>Murinae</taxon>
        <taxon>Mus</taxon>
        <taxon>Mus</taxon>
    </lineage>
</organism>
<protein>
    <recommendedName>
        <fullName evidence="16">Actin nucleation-promoting factor WASL</fullName>
    </recommendedName>
    <alternativeName>
        <fullName>Neural Wiskott-Aldrich syndrome protein</fullName>
        <shortName>N-WASP</shortName>
    </alternativeName>
</protein>
<accession>Q91YD9</accession>
<dbReference type="EMBL" id="AJ318416">
    <property type="protein sequence ID" value="CAC69994.1"/>
    <property type="molecule type" value="mRNA"/>
</dbReference>
<dbReference type="CCDS" id="CCDS19945.1"/>
<dbReference type="RefSeq" id="NP_082735.2">
    <property type="nucleotide sequence ID" value="NM_028459.2"/>
</dbReference>
<dbReference type="PDB" id="3M3N">
    <property type="method" value="X-ray"/>
    <property type="resolution" value="7.00 A"/>
    <property type="chains" value="W=397-474"/>
</dbReference>
<dbReference type="PDB" id="6UHC">
    <property type="method" value="EM"/>
    <property type="resolution" value="3.90 A"/>
    <property type="chains" value="H/I=1-501"/>
</dbReference>
<dbReference type="PDBsum" id="3M3N"/>
<dbReference type="PDBsum" id="6UHC"/>
<dbReference type="BMRB" id="Q91YD9"/>
<dbReference type="EMDB" id="EMD-20770"/>
<dbReference type="EMDB" id="EMD-25707"/>
<dbReference type="SMR" id="Q91YD9"/>
<dbReference type="BioGRID" id="215819">
    <property type="interactions" value="8"/>
</dbReference>
<dbReference type="CORUM" id="Q91YD9"/>
<dbReference type="DIP" id="DIP-29788N"/>
<dbReference type="FunCoup" id="Q91YD9">
    <property type="interactions" value="3350"/>
</dbReference>
<dbReference type="IntAct" id="Q91YD9">
    <property type="interactions" value="11"/>
</dbReference>
<dbReference type="MINT" id="Q91YD9"/>
<dbReference type="STRING" id="10090.ENSMUSP00000031695"/>
<dbReference type="GlyGen" id="Q91YD9">
    <property type="glycosylation" value="3 sites, 1 N-linked glycan (1 site)"/>
</dbReference>
<dbReference type="iPTMnet" id="Q91YD9"/>
<dbReference type="PhosphoSitePlus" id="Q91YD9"/>
<dbReference type="SwissPalm" id="Q91YD9"/>
<dbReference type="jPOST" id="Q91YD9"/>
<dbReference type="PaxDb" id="10090-ENSMUSP00000031695"/>
<dbReference type="ProteomicsDB" id="297624"/>
<dbReference type="Pumba" id="Q91YD9"/>
<dbReference type="Antibodypedia" id="1487">
    <property type="antibodies" value="247 antibodies from 37 providers"/>
</dbReference>
<dbReference type="DNASU" id="73178"/>
<dbReference type="Ensembl" id="ENSMUST00000031695.15">
    <property type="protein sequence ID" value="ENSMUSP00000031695.9"/>
    <property type="gene ID" value="ENSMUSG00000029684.15"/>
</dbReference>
<dbReference type="GeneID" id="73178"/>
<dbReference type="KEGG" id="mmu:73178"/>
<dbReference type="UCSC" id="uc009bbv.2">
    <property type="organism name" value="mouse"/>
</dbReference>
<dbReference type="AGR" id="MGI:1920428"/>
<dbReference type="CTD" id="8976"/>
<dbReference type="MGI" id="MGI:1920428">
    <property type="gene designation" value="Wasl"/>
</dbReference>
<dbReference type="VEuPathDB" id="HostDB:ENSMUSG00000029684"/>
<dbReference type="eggNOG" id="KOG3671">
    <property type="taxonomic scope" value="Eukaryota"/>
</dbReference>
<dbReference type="GeneTree" id="ENSGT00730000110895"/>
<dbReference type="HOGENOM" id="CLU_015385_3_1_1"/>
<dbReference type="InParanoid" id="Q91YD9"/>
<dbReference type="OMA" id="EYNQDRK"/>
<dbReference type="OrthoDB" id="8963340at2759"/>
<dbReference type="PhylomeDB" id="Q91YD9"/>
<dbReference type="TreeFam" id="TF316736"/>
<dbReference type="BioGRID-ORCS" id="73178">
    <property type="hits" value="3 hits in 79 CRISPR screens"/>
</dbReference>
<dbReference type="CD-CODE" id="CE726F99">
    <property type="entry name" value="Postsynaptic density"/>
</dbReference>
<dbReference type="ChiTaRS" id="Wasl">
    <property type="organism name" value="mouse"/>
</dbReference>
<dbReference type="PRO" id="PR:Q91YD9"/>
<dbReference type="Proteomes" id="UP000000589">
    <property type="component" value="Chromosome 6"/>
</dbReference>
<dbReference type="RNAct" id="Q91YD9">
    <property type="molecule type" value="protein"/>
</dbReference>
<dbReference type="Bgee" id="ENSMUSG00000029684">
    <property type="expression patterns" value="Expressed in renal medulla collecting duct and 249 other cell types or tissues"/>
</dbReference>
<dbReference type="ExpressionAtlas" id="Q91YD9">
    <property type="expression patterns" value="baseline and differential"/>
</dbReference>
<dbReference type="GO" id="GO:0030478">
    <property type="term" value="C:actin cap"/>
    <property type="evidence" value="ECO:0000314"/>
    <property type="project" value="MGI"/>
</dbReference>
<dbReference type="GO" id="GO:0005737">
    <property type="term" value="C:cytoplasm"/>
    <property type="evidence" value="ECO:0000305"/>
    <property type="project" value="MGI"/>
</dbReference>
<dbReference type="GO" id="GO:0031410">
    <property type="term" value="C:cytoplasmic vesicle"/>
    <property type="evidence" value="ECO:0000250"/>
    <property type="project" value="BHF-UCL"/>
</dbReference>
<dbReference type="GO" id="GO:0005829">
    <property type="term" value="C:cytosol"/>
    <property type="evidence" value="ECO:0000304"/>
    <property type="project" value="Reactome"/>
</dbReference>
<dbReference type="GO" id="GO:0098978">
    <property type="term" value="C:glutamatergic synapse"/>
    <property type="evidence" value="ECO:0000314"/>
    <property type="project" value="SynGO"/>
</dbReference>
<dbReference type="GO" id="GO:0030027">
    <property type="term" value="C:lamellipodium"/>
    <property type="evidence" value="ECO:0000314"/>
    <property type="project" value="MGI"/>
</dbReference>
<dbReference type="GO" id="GO:0005634">
    <property type="term" value="C:nucleus"/>
    <property type="evidence" value="ECO:0000250"/>
    <property type="project" value="UniProtKB"/>
</dbReference>
<dbReference type="GO" id="GO:0003779">
    <property type="term" value="F:actin binding"/>
    <property type="evidence" value="ECO:0007669"/>
    <property type="project" value="UniProtKB-KW"/>
</dbReference>
<dbReference type="GO" id="GO:0030036">
    <property type="term" value="P:actin cytoskeleton organization"/>
    <property type="evidence" value="ECO:0000315"/>
    <property type="project" value="MGI"/>
</dbReference>
<dbReference type="GO" id="GO:0030041">
    <property type="term" value="P:actin filament polymerization"/>
    <property type="evidence" value="ECO:0000250"/>
    <property type="project" value="UniProtKB"/>
</dbReference>
<dbReference type="GO" id="GO:0045010">
    <property type="term" value="P:actin nucleation"/>
    <property type="evidence" value="ECO:0000304"/>
    <property type="project" value="MGI"/>
</dbReference>
<dbReference type="GO" id="GO:0051301">
    <property type="term" value="P:cell division"/>
    <property type="evidence" value="ECO:0007669"/>
    <property type="project" value="UniProtKB-KW"/>
</dbReference>
<dbReference type="GO" id="GO:0060997">
    <property type="term" value="P:dendritic spine morphogenesis"/>
    <property type="evidence" value="ECO:0000315"/>
    <property type="project" value="UniProtKB"/>
</dbReference>
<dbReference type="GO" id="GO:2000402">
    <property type="term" value="P:negative regulation of lymphocyte migration"/>
    <property type="evidence" value="ECO:0007669"/>
    <property type="project" value="Ensembl"/>
</dbReference>
<dbReference type="GO" id="GO:1903526">
    <property type="term" value="P:negative regulation of membrane tubulation"/>
    <property type="evidence" value="ECO:0007669"/>
    <property type="project" value="Ensembl"/>
</dbReference>
<dbReference type="GO" id="GO:2000370">
    <property type="term" value="P:positive regulation of clathrin-dependent endocytosis"/>
    <property type="evidence" value="ECO:0000250"/>
    <property type="project" value="BHF-UCL"/>
</dbReference>
<dbReference type="GO" id="GO:0051491">
    <property type="term" value="P:positive regulation of filopodium assembly"/>
    <property type="evidence" value="ECO:0000250"/>
    <property type="project" value="BHF-UCL"/>
</dbReference>
<dbReference type="GO" id="GO:0045944">
    <property type="term" value="P:positive regulation of transcription by RNA polymerase II"/>
    <property type="evidence" value="ECO:0000250"/>
    <property type="project" value="UniProtKB"/>
</dbReference>
<dbReference type="GO" id="GO:0031503">
    <property type="term" value="P:protein-containing complex localization"/>
    <property type="evidence" value="ECO:0000315"/>
    <property type="project" value="MGI"/>
</dbReference>
<dbReference type="GO" id="GO:0099175">
    <property type="term" value="P:regulation of postsynapse organization"/>
    <property type="evidence" value="ECO:0000314"/>
    <property type="project" value="SynGO"/>
</dbReference>
<dbReference type="GO" id="GO:0032880">
    <property type="term" value="P:regulation of protein localization"/>
    <property type="evidence" value="ECO:0000315"/>
    <property type="project" value="MGI"/>
</dbReference>
<dbReference type="GO" id="GO:0009617">
    <property type="term" value="P:response to bacterium"/>
    <property type="evidence" value="ECO:0000315"/>
    <property type="project" value="MGI"/>
</dbReference>
<dbReference type="GO" id="GO:0051653">
    <property type="term" value="P:spindle localization"/>
    <property type="evidence" value="ECO:0000315"/>
    <property type="project" value="MGI"/>
</dbReference>
<dbReference type="GO" id="GO:0006900">
    <property type="term" value="P:vesicle budding from membrane"/>
    <property type="evidence" value="ECO:0000250"/>
    <property type="project" value="BHF-UCL"/>
</dbReference>
<dbReference type="GO" id="GO:0016050">
    <property type="term" value="P:vesicle organization"/>
    <property type="evidence" value="ECO:0000250"/>
    <property type="project" value="BHF-UCL"/>
</dbReference>
<dbReference type="GO" id="GO:0030050">
    <property type="term" value="P:vesicle transport along actin filament"/>
    <property type="evidence" value="ECO:0000250"/>
    <property type="project" value="BHF-UCL"/>
</dbReference>
<dbReference type="CDD" id="cd00132">
    <property type="entry name" value="CRIB"/>
    <property type="match status" value="1"/>
</dbReference>
<dbReference type="CDD" id="cd01205">
    <property type="entry name" value="EVH1_WASP-like"/>
    <property type="match status" value="1"/>
</dbReference>
<dbReference type="CDD" id="cd22075">
    <property type="entry name" value="WH2_hN-WASP_r2_like"/>
    <property type="match status" value="1"/>
</dbReference>
<dbReference type="CDD" id="cd22074">
    <property type="entry name" value="WH2_N-WASP_r1"/>
    <property type="match status" value="1"/>
</dbReference>
<dbReference type="DisProt" id="DP02830"/>
<dbReference type="FunFam" id="3.90.810.10:FF:000006">
    <property type="entry name" value="Neural Wiskott-Aldrich syndrome protein"/>
    <property type="match status" value="1"/>
</dbReference>
<dbReference type="FunFam" id="2.30.29.30:FF:000130">
    <property type="entry name" value="neural Wiskott-Aldrich syndrome protein"/>
    <property type="match status" value="1"/>
</dbReference>
<dbReference type="FunFam" id="3.90.810.10:FF:000003">
    <property type="entry name" value="Neural Wiskott-Aldrich syndrome protein-like"/>
    <property type="match status" value="1"/>
</dbReference>
<dbReference type="Gene3D" id="3.90.810.10">
    <property type="entry name" value="CRIB domain"/>
    <property type="match status" value="2"/>
</dbReference>
<dbReference type="Gene3D" id="2.30.29.30">
    <property type="entry name" value="Pleckstrin-homology domain (PH domain)/Phosphotyrosine-binding domain (PTB)"/>
    <property type="match status" value="1"/>
</dbReference>
<dbReference type="InterPro" id="IPR000095">
    <property type="entry name" value="CRIB_dom"/>
</dbReference>
<dbReference type="InterPro" id="IPR036936">
    <property type="entry name" value="CRIB_dom_sf"/>
</dbReference>
<dbReference type="InterPro" id="IPR011993">
    <property type="entry name" value="PH-like_dom_sf"/>
</dbReference>
<dbReference type="InterPro" id="IPR011026">
    <property type="entry name" value="WAS_C"/>
</dbReference>
<dbReference type="InterPro" id="IPR033927">
    <property type="entry name" value="WASPfam_EVH1"/>
</dbReference>
<dbReference type="InterPro" id="IPR000697">
    <property type="entry name" value="WH1/EVH1_dom"/>
</dbReference>
<dbReference type="InterPro" id="IPR003124">
    <property type="entry name" value="WH2_dom"/>
</dbReference>
<dbReference type="PANTHER" id="PTHR11202:SF36">
    <property type="entry name" value="ACTIN NUCLEATION-PROMOTING FACTOR WASL"/>
    <property type="match status" value="1"/>
</dbReference>
<dbReference type="PANTHER" id="PTHR11202">
    <property type="entry name" value="SPROUTY-RELATED, EVH1 DOMAIN-CONTAINING PROTEIN FAMILY MEMBER"/>
    <property type="match status" value="1"/>
</dbReference>
<dbReference type="Pfam" id="PF00786">
    <property type="entry name" value="PBD"/>
    <property type="match status" value="1"/>
</dbReference>
<dbReference type="Pfam" id="PF00568">
    <property type="entry name" value="WH1"/>
    <property type="match status" value="1"/>
</dbReference>
<dbReference type="Pfam" id="PF02205">
    <property type="entry name" value="WH2"/>
    <property type="match status" value="2"/>
</dbReference>
<dbReference type="SMART" id="SM00285">
    <property type="entry name" value="PBD"/>
    <property type="match status" value="1"/>
</dbReference>
<dbReference type="SMART" id="SM00461">
    <property type="entry name" value="WH1"/>
    <property type="match status" value="1"/>
</dbReference>
<dbReference type="SMART" id="SM00246">
    <property type="entry name" value="WH2"/>
    <property type="match status" value="2"/>
</dbReference>
<dbReference type="SUPFAM" id="SSF50729">
    <property type="entry name" value="PH domain-like"/>
    <property type="match status" value="1"/>
</dbReference>
<dbReference type="SUPFAM" id="SSF47912">
    <property type="entry name" value="Wiscott-Aldrich syndrome protein, WASP, C-terminal domain"/>
    <property type="match status" value="2"/>
</dbReference>
<dbReference type="PROSITE" id="PS50108">
    <property type="entry name" value="CRIB"/>
    <property type="match status" value="1"/>
</dbReference>
<dbReference type="PROSITE" id="PS50229">
    <property type="entry name" value="WH1"/>
    <property type="match status" value="1"/>
</dbReference>
<dbReference type="PROSITE" id="PS51082">
    <property type="entry name" value="WH2"/>
    <property type="match status" value="2"/>
</dbReference>
<evidence type="ECO:0000250" key="1">
    <source>
        <dbReference type="UniProtKB" id="O00401"/>
    </source>
</evidence>
<evidence type="ECO:0000250" key="2">
    <source>
        <dbReference type="UniProtKB" id="O08816"/>
    </source>
</evidence>
<evidence type="ECO:0000250" key="3">
    <source>
        <dbReference type="UniProtKB" id="Q95107"/>
    </source>
</evidence>
<evidence type="ECO:0000255" key="4">
    <source>
        <dbReference type="PROSITE-ProRule" id="PRU00057"/>
    </source>
</evidence>
<evidence type="ECO:0000255" key="5">
    <source>
        <dbReference type="PROSITE-ProRule" id="PRU00406"/>
    </source>
</evidence>
<evidence type="ECO:0000255" key="6">
    <source>
        <dbReference type="PROSITE-ProRule" id="PRU00410"/>
    </source>
</evidence>
<evidence type="ECO:0000256" key="7">
    <source>
        <dbReference type="SAM" id="MobiDB-lite"/>
    </source>
</evidence>
<evidence type="ECO:0000269" key="8">
    <source>
    </source>
</evidence>
<evidence type="ECO:0000269" key="9">
    <source>
    </source>
</evidence>
<evidence type="ECO:0000269" key="10">
    <source>
    </source>
</evidence>
<evidence type="ECO:0000269" key="11">
    <source>
    </source>
</evidence>
<evidence type="ECO:0000269" key="12">
    <source>
    </source>
</evidence>
<evidence type="ECO:0000269" key="13">
    <source>
    </source>
</evidence>
<evidence type="ECO:0000269" key="14">
    <source>
    </source>
</evidence>
<evidence type="ECO:0000269" key="15">
    <source>
    </source>
</evidence>
<evidence type="ECO:0000305" key="16"/>
<evidence type="ECO:0007744" key="17">
    <source>
    </source>
</evidence>
<evidence type="ECO:0007744" key="18">
    <source>
    </source>
</evidence>
<evidence type="ECO:0007744" key="19">
    <source>
    </source>
</evidence>
<evidence type="ECO:0007744" key="20">
    <source>
    </source>
</evidence>
<sequence>MSSGQQPPRRVTNVGSLLLTPQENESLFSFLGKKCVTMSSAVVQLYAADRNCMWAKKCSGVACLVKDNPQRSYFLRIFDIKDGKLLWEQELYNNFVYNSPRGYFHTFAGDTCQVALNFANEEEAKKFRKAVTDLLGRRQRKSEKRRDAPNGPNLPMATVDIKNPEITTNRFYGSQVNNISHTKEKKKGKAKKKRLTKADIGTPSNFQHIGHVGWDPNTGFDLNNLDPELKNLFDMCGISEAQLKDRETSKVIYDFIEKTGGVEAVKNELRRQAPPPPPPSRGGPPPPPPPPHSSGPPPPPARGRGAPPPPPSRAPTAAPPPPPPSRPGVVVPPPPPNRMYPPPPPALPSSAPSGPPPPPPPSMAGSTAPPPPPPPPPPPGPPPPPGLPSDGDHQVPAPSGNKAALLDQIREGAQLKKVEQNSRPVSCSGRDALLDQIRQGIQLKSVSDGQESTPPTPAPTSGIVGALMEVMQKRSKAIHSSDEDEDDDDEEDFEDDDEWED</sequence>
<reference key="1">
    <citation type="journal article" date="2001" name="EMBO Rep.">
        <title>Actin pedestal formation by enteropathogenic Escherichia coli and intracellular motility of Shigella flexneri are abolished in N-WASP-defective cells.</title>
        <authorList>
            <person name="Lommel S."/>
            <person name="Benesch S."/>
            <person name="Rottner K."/>
            <person name="Franz T."/>
            <person name="Wehland J."/>
            <person name="Kuehn R."/>
        </authorList>
    </citation>
    <scope>NUCLEOTIDE SEQUENCE [MRNA]</scope>
    <source>
        <strain>C57BL/6J</strain>
        <tissue>Brain</tissue>
    </source>
</reference>
<reference key="2">
    <citation type="journal article" date="2000" name="J. Cell Sci.">
        <title>All three PACSIN isoforms bind to endocytic proteins and inhibit endocytosis.</title>
        <authorList>
            <person name="Modregger J."/>
            <person name="Ritter B."/>
            <person name="Witter B."/>
            <person name="Paulsson M."/>
            <person name="Plomann M."/>
        </authorList>
    </citation>
    <scope>INTERACTION WITH PACSIN1; PACSIN2 AND PACSIN3</scope>
</reference>
<reference key="3">
    <citation type="journal article" date="2003" name="J. Biol. Chem.">
        <title>Translocation of N-WASP by nuclear localization and export signals into the nucleus modulates expression of HSP90.</title>
        <authorList>
            <person name="Suetsugu S."/>
            <person name="Takenawa T."/>
        </authorList>
    </citation>
    <scope>FUNCTION</scope>
    <scope>SUBCELLULAR LOCATION</scope>
    <scope>MUTAGENESIS OF TYR-253</scope>
</reference>
<reference key="4">
    <citation type="journal article" date="2003" name="J. Biol. Chem.">
        <title>Tuba, a novel protein containing bin/amphiphysin/Rvs and Dbl homology domains, links dynamin to regulation of the actin cytoskeleton.</title>
        <authorList>
            <person name="Salazar M.A."/>
            <person name="Kwiatkowski A.V."/>
            <person name="Pellegrini L."/>
            <person name="Cestra G."/>
            <person name="Butler M.H."/>
            <person name="Rossman K.L."/>
            <person name="Serna D.M."/>
            <person name="Sondek J."/>
            <person name="Gertler F.B."/>
            <person name="De Camilli P."/>
        </authorList>
    </citation>
    <scope>INTERACTION WITH DNMBP</scope>
</reference>
<reference key="5">
    <citation type="journal article" date="2004" name="Biochem. Biophys. Res. Commun.">
        <title>FBP11 regulates nuclear localization of N-WASP and inhibits N-WASP-dependent microspike formation.</title>
        <authorList>
            <person name="Mizutani K."/>
            <person name="Suetsugu S."/>
            <person name="Takenawa T."/>
        </authorList>
    </citation>
    <scope>INTERACTION WITH PRPF40A</scope>
</reference>
<reference key="6">
    <citation type="journal article" date="2004" name="J. Biol. Chem.">
        <title>Focal adhesion kinase regulation of N-WASP subcellular localization and function.</title>
        <authorList>
            <person name="Wu X."/>
            <person name="Suetsugu S."/>
            <person name="Cooper L.A."/>
            <person name="Takenawa T."/>
            <person name="Guan J.L."/>
        </authorList>
    </citation>
    <scope>INTERACTION WITH PTK2/FAK1</scope>
    <scope>SUBCELLULAR LOCATION</scope>
    <scope>PHOSPHORYLATION AT TYR-253</scope>
</reference>
<reference key="7">
    <citation type="journal article" date="2008" name="J. Proteome Res.">
        <title>Large-scale identification and evolution indexing of tyrosine phosphorylation sites from murine brain.</title>
        <authorList>
            <person name="Ballif B.A."/>
            <person name="Carey G.R."/>
            <person name="Sunyaev S.R."/>
            <person name="Gygi S.P."/>
        </authorList>
    </citation>
    <scope>PHOSPHORYLATION [LARGE SCALE ANALYSIS] AT TYR-253</scope>
    <scope>IDENTIFICATION BY MASS SPECTROMETRY [LARGE SCALE ANALYSIS]</scope>
    <source>
        <tissue>Brain</tissue>
    </source>
</reference>
<reference key="8">
    <citation type="journal article" date="2009" name="Immunity">
        <title>The phagosomal proteome in interferon-gamma-activated macrophages.</title>
        <authorList>
            <person name="Trost M."/>
            <person name="English L."/>
            <person name="Lemieux S."/>
            <person name="Courcelles M."/>
            <person name="Desjardins M."/>
            <person name="Thibault P."/>
        </authorList>
    </citation>
    <scope>PHOSPHORYLATION [LARGE SCALE ANALYSIS] AT TYR-253</scope>
    <scope>IDENTIFICATION BY MASS SPECTROMETRY [LARGE SCALE ANALYSIS]</scope>
</reference>
<reference key="9">
    <citation type="journal article" date="2009" name="Mol. Cell. Proteomics">
        <title>Large scale localization of protein phosphorylation by use of electron capture dissociation mass spectrometry.</title>
        <authorList>
            <person name="Sweet S.M."/>
            <person name="Bailey C.M."/>
            <person name="Cunningham D.L."/>
            <person name="Heath J.K."/>
            <person name="Cooper H.J."/>
        </authorList>
    </citation>
    <scope>PHOSPHORYLATION [LARGE SCALE ANALYSIS] AT TYR-253</scope>
    <scope>IDENTIFICATION BY MASS SPECTROMETRY [LARGE SCALE ANALYSIS]</scope>
    <source>
        <tissue>Embryonic fibroblast</tissue>
    </source>
</reference>
<reference key="10">
    <citation type="journal article" date="2010" name="Cell">
        <title>A tissue-specific atlas of mouse protein phosphorylation and expression.</title>
        <authorList>
            <person name="Huttlin E.L."/>
            <person name="Jedrychowski M.P."/>
            <person name="Elias J.E."/>
            <person name="Goswami T."/>
            <person name="Rad R."/>
            <person name="Beausoleil S.A."/>
            <person name="Villen J."/>
            <person name="Haas W."/>
            <person name="Sowa M.E."/>
            <person name="Gygi S.P."/>
        </authorList>
    </citation>
    <scope>PHOSPHORYLATION [LARGE SCALE ANALYSIS] AT TYR-253 AND SER-480</scope>
    <scope>IDENTIFICATION BY MASS SPECTROMETRY [LARGE SCALE ANALYSIS]</scope>
    <source>
        <tissue>Brain</tissue>
        <tissue>Kidney</tissue>
        <tissue>Liver</tissue>
        <tissue>Lung</tissue>
        <tissue>Pancreas</tissue>
        <tissue>Spleen</tissue>
        <tissue>Testis</tissue>
    </source>
</reference>
<reference key="11">
    <citation type="journal article" date="2013" name="PLoS ONE">
        <title>FCHSD1 and FCHSD2 are expressed in hair cell stereocilia and cuticular plate and regulate actin polymerization in vitro.</title>
        <authorList>
            <person name="Cao H."/>
            <person name="Yin X."/>
            <person name="Cao Y."/>
            <person name="Jin Y."/>
            <person name="Wang S."/>
            <person name="Kong Y."/>
            <person name="Chen Y."/>
            <person name="Gao J."/>
            <person name="Heller S."/>
            <person name="Xu Z."/>
        </authorList>
    </citation>
    <scope>INTERACTION WITH FCHSD2</scope>
</reference>
<reference key="12">
    <citation type="journal article" date="2015" name="Mol. Biol. Cell">
        <title>The RhoGEF DOCK10 is essential for dendritic spine morphogenesis.</title>
        <authorList>
            <person name="Jaudon F."/>
            <person name="Raynaud F."/>
            <person name="Wehrle R."/>
            <person name="Bellanger J.M."/>
            <person name="Doulazmi M."/>
            <person name="Vodjdani G."/>
            <person name="Gasman S."/>
            <person name="Fagni L."/>
            <person name="Dusart I."/>
            <person name="Debant A."/>
            <person name="Schmidt S."/>
        </authorList>
    </citation>
    <scope>FUNCTION</scope>
</reference>
<reference key="13">
    <citation type="journal article" date="2018" name="Cell">
        <title>A Flat BAR Protein Promotes Actin Polymerization at the Base of Clathrin-Coated Pits.</title>
        <authorList>
            <person name="Almeida-Souza L."/>
            <person name="Frank R.A.W."/>
            <person name="Garcia-Nafria J."/>
            <person name="Colussi A."/>
            <person name="Gunawardana N."/>
            <person name="Johnson C.M."/>
            <person name="Yu M."/>
            <person name="Howard G."/>
            <person name="Andrews B."/>
            <person name="Vallis Y."/>
            <person name="McMahon H.T."/>
        </authorList>
    </citation>
    <scope>INTERACTION WITH FCHSD2 AND FCHSD1</scope>
</reference>
<comment type="function">
    <text evidence="1 9 14">Regulates actin polymerization by stimulating the actin-nucleating activity of the Arp2/3 complex. Involved in various processes, such as mitosis and cytokinesis, via its role in the regulation of actin polymerization. Together with CDC42, involved in the extension and maintenance of the formation of thin, actin-rich surface projections called filopodia. In addition to its role in the cytoplasm, also plays a role in the nucleus by regulating gene transcription, probably by promoting nuclear actin polymerization (By similarity). Binds to HSF1/HSTF1 and forms a complex on heat shock promoter elements (HSE) that negatively regulates HSP90 expression (PubMed:12871950). Plays a role in dendrite spine morphogenesis (PubMed:25851601).</text>
</comment>
<comment type="subunit">
    <text evidence="1 3 8 10 11 12 13 15">Binds actin and the Arp2/3 complex. Interacts with CDC42 (By similarity). Interacts with FCHSD1 (PubMed:29887380). Interacts with FCHSD2 (PubMed:23437151, PubMed:29887380). Binds to SH3 domains of GRB2. Interacts with the C-terminal SH3 domain of DNMBP (PubMed:14506234). Interacts with SNX9 (By similarity). Interacts with the WW domains of PRPF40A/FBP11 (PubMed:14697212). Interacts with PTK2/FAK1 (PubMed:14676198). Interacts with PACSIN1, PACSIN2 and PACSIN3 (PubMed:11082044). Interacts with NOSTRIN. Binds to TNK2. Interacts with SNX33. Interacts with NONO (via second RRM domain); the interaction is direct. Component of a multiprotein complex with NONO and SFPQ; associates with the complex via direct interaction with NONO (By similarity).</text>
</comment>
<comment type="interaction">
    <interactant intactId="EBI-642417">
        <id>Q91YD9</id>
    </interactant>
    <interactant intactId="EBI-397955">
        <id>Q60598</id>
        <label>Cttn</label>
    </interactant>
    <organismsDiffer>false</organismsDiffer>
    <experiments>4</experiments>
</comment>
<comment type="interaction">
    <interactant intactId="EBI-642417">
        <id>Q91YD9</id>
    </interactant>
    <interactant intactId="EBI-644224">
        <id>P09055</id>
        <label>Itgb1</label>
    </interactant>
    <organismsDiffer>false</organismsDiffer>
    <experiments>2</experiments>
</comment>
<comment type="interaction">
    <interactant intactId="EBI-642417">
        <id>Q91YD9</id>
    </interactant>
    <interactant intactId="EBI-1554855">
        <id>P05622</id>
        <label>Pdgfrb</label>
    </interactant>
    <organismsDiffer>false</organismsDiffer>
    <experiments>2</experiments>
</comment>
<comment type="interaction">
    <interactant intactId="EBI-642417">
        <id>Q91YD9</id>
    </interactant>
    <interactant intactId="EBI-367540">
        <id>P68135</id>
        <label>ACTA1</label>
    </interactant>
    <organismsDiffer>true</organismsDiffer>
    <experiments>5</experiments>
</comment>
<comment type="subcellular location">
    <subcellularLocation>
        <location evidence="2">Cytoplasm</location>
        <location evidence="2">Cytoskeleton</location>
    </subcellularLocation>
    <subcellularLocation>
        <location evidence="9 11">Nucleus</location>
    </subcellularLocation>
    <subcellularLocation>
        <location evidence="9 11">Cytoplasm</location>
    </subcellularLocation>
    <text evidence="9 11">Preferentially localized in the cytoplasm when phosphorylated and in the nucleus when unphosphorylated (PubMed:12871950, PubMed:14676198). Exported from the nucleus by an nuclear export signal (NES)-dependent mechanism to the cytoplasm (PubMed:12871950).</text>
</comment>
<comment type="PTM">
    <text evidence="1">Phosphorylation at Ser-239, Tyr-253, Ser-480 and Ser-481 enhances actin polymerization activity.</text>
</comment>
<name>WASL_MOUSE</name>
<proteinExistence type="evidence at protein level"/>
<gene>
    <name type="primary">Wasl</name>
</gene>
<keyword id="KW-0002">3D-structure</keyword>
<keyword id="KW-0007">Acetylation</keyword>
<keyword id="KW-0009">Actin-binding</keyword>
<keyword id="KW-0131">Cell cycle</keyword>
<keyword id="KW-0132">Cell division</keyword>
<keyword id="KW-0963">Cytoplasm</keyword>
<keyword id="KW-0206">Cytoskeleton</keyword>
<keyword id="KW-0488">Methylation</keyword>
<keyword id="KW-0498">Mitosis</keyword>
<keyword id="KW-0539">Nucleus</keyword>
<keyword id="KW-0597">Phosphoprotein</keyword>
<keyword id="KW-1185">Reference proteome</keyword>
<keyword id="KW-0677">Repeat</keyword>
<keyword id="KW-0804">Transcription</keyword>
<keyword id="KW-0805">Transcription regulation</keyword>